<evidence type="ECO:0000255" key="1">
    <source>
        <dbReference type="HAMAP-Rule" id="MF_01333"/>
    </source>
</evidence>
<evidence type="ECO:0000305" key="2"/>
<keyword id="KW-0687">Ribonucleoprotein</keyword>
<keyword id="KW-0689">Ribosomal protein</keyword>
<keyword id="KW-0694">RNA-binding</keyword>
<keyword id="KW-0699">rRNA-binding</keyword>
<keyword id="KW-0820">tRNA-binding</keyword>
<reference key="1">
    <citation type="journal article" date="1999" name="Nat. Genet.">
        <title>Comparative genomes of Chlamydia pneumoniae and C. trachomatis.</title>
        <authorList>
            <person name="Kalman S."/>
            <person name="Mitchell W.P."/>
            <person name="Marathe R."/>
            <person name="Lammel C.J."/>
            <person name="Fan J."/>
            <person name="Hyman R.W."/>
            <person name="Olinger L."/>
            <person name="Grimwood J."/>
            <person name="Davis R.W."/>
            <person name="Stephens R.S."/>
        </authorList>
    </citation>
    <scope>NUCLEOTIDE SEQUENCE [LARGE SCALE GENOMIC DNA]</scope>
    <source>
        <strain>CWL029</strain>
    </source>
</reference>
<reference key="2">
    <citation type="journal article" date="2000" name="Nucleic Acids Res.">
        <title>Genome sequences of Chlamydia trachomatis MoPn and Chlamydia pneumoniae AR39.</title>
        <authorList>
            <person name="Read T.D."/>
            <person name="Brunham R.C."/>
            <person name="Shen C."/>
            <person name="Gill S.R."/>
            <person name="Heidelberg J.F."/>
            <person name="White O."/>
            <person name="Hickey E.K."/>
            <person name="Peterson J.D."/>
            <person name="Utterback T.R."/>
            <person name="Berry K.J."/>
            <person name="Bass S."/>
            <person name="Linher K.D."/>
            <person name="Weidman J.F."/>
            <person name="Khouri H.M."/>
            <person name="Craven B."/>
            <person name="Bowman C."/>
            <person name="Dodson R.J."/>
            <person name="Gwinn M.L."/>
            <person name="Nelson W.C."/>
            <person name="DeBoy R.T."/>
            <person name="Kolonay J.F."/>
            <person name="McClarty G."/>
            <person name="Salzberg S.L."/>
            <person name="Eisen J.A."/>
            <person name="Fraser C.M."/>
        </authorList>
    </citation>
    <scope>NUCLEOTIDE SEQUENCE [LARGE SCALE GENOMIC DNA]</scope>
    <source>
        <strain>AR39</strain>
    </source>
</reference>
<reference key="3">
    <citation type="journal article" date="2000" name="Nucleic Acids Res.">
        <title>Comparison of whole genome sequences of Chlamydia pneumoniae J138 from Japan and CWL029 from USA.</title>
        <authorList>
            <person name="Shirai M."/>
            <person name="Hirakawa H."/>
            <person name="Kimoto M."/>
            <person name="Tabuchi M."/>
            <person name="Kishi F."/>
            <person name="Ouchi K."/>
            <person name="Shiba T."/>
            <person name="Ishii K."/>
            <person name="Hattori M."/>
            <person name="Kuhara S."/>
            <person name="Nakazawa T."/>
        </authorList>
    </citation>
    <scope>NUCLEOTIDE SEQUENCE [LARGE SCALE GENOMIC DNA]</scope>
    <source>
        <strain>J138</strain>
    </source>
</reference>
<reference key="4">
    <citation type="submission" date="2002-05" db="EMBL/GenBank/DDBJ databases">
        <title>The genome sequence of Chlamydia pneumoniae TW183 and comparison with other Chlamydia strains based on whole genome sequence analysis.</title>
        <authorList>
            <person name="Geng M.M."/>
            <person name="Schuhmacher A."/>
            <person name="Muehldorfer I."/>
            <person name="Bensch K.W."/>
            <person name="Schaefer K.P."/>
            <person name="Schneider S."/>
            <person name="Pohl T."/>
            <person name="Essig A."/>
            <person name="Marre R."/>
            <person name="Melchers K."/>
        </authorList>
    </citation>
    <scope>NUCLEOTIDE SEQUENCE [LARGE SCALE GENOMIC DNA]</scope>
    <source>
        <strain>TW-183</strain>
    </source>
</reference>
<comment type="function">
    <text evidence="1">This is one of the proteins that bind and probably mediate the attachment of the 5S RNA into the large ribosomal subunit, where it forms part of the central protuberance. In the 70S ribosome it contacts protein S13 of the 30S subunit (bridge B1b), connecting the 2 subunits; this bridge is implicated in subunit movement. Contacts the P site tRNA; the 5S rRNA and some of its associated proteins might help stabilize positioning of ribosome-bound tRNAs.</text>
</comment>
<comment type="subunit">
    <text evidence="1">Part of the 50S ribosomal subunit; part of the 5S rRNA/L5/L18/L25 subcomplex. Contacts the 5S rRNA and the P site tRNA. Forms a bridge to the 30S subunit in the 70S ribosome.</text>
</comment>
<comment type="similarity">
    <text evidence="1">Belongs to the universal ribosomal protein uL5 family.</text>
</comment>
<accession>Q9Z7R9</accession>
<accession>Q9JQG8</accession>
<name>RL5_CHLPN</name>
<protein>
    <recommendedName>
        <fullName evidence="1">Large ribosomal subunit protein uL5</fullName>
    </recommendedName>
    <alternativeName>
        <fullName evidence="2">50S ribosomal protein L5</fullName>
    </alternativeName>
</protein>
<feature type="chain" id="PRO_0000124912" description="Large ribosomal subunit protein uL5">
    <location>
        <begin position="1"/>
        <end position="180"/>
    </location>
</feature>
<organism>
    <name type="scientific">Chlamydia pneumoniae</name>
    <name type="common">Chlamydophila pneumoniae</name>
    <dbReference type="NCBI Taxonomy" id="83558"/>
    <lineage>
        <taxon>Bacteria</taxon>
        <taxon>Pseudomonadati</taxon>
        <taxon>Chlamydiota</taxon>
        <taxon>Chlamydiia</taxon>
        <taxon>Chlamydiales</taxon>
        <taxon>Chlamydiaceae</taxon>
        <taxon>Chlamydia/Chlamydophila group</taxon>
        <taxon>Chlamydia</taxon>
    </lineage>
</organism>
<proteinExistence type="inferred from homology"/>
<dbReference type="EMBL" id="AE001363">
    <property type="protein sequence ID" value="AAD18774.1"/>
    <property type="molecule type" value="Genomic_DNA"/>
</dbReference>
<dbReference type="EMBL" id="AE002161">
    <property type="protein sequence ID" value="AAF37995.1"/>
    <property type="molecule type" value="Genomic_DNA"/>
</dbReference>
<dbReference type="EMBL" id="BA000008">
    <property type="protein sequence ID" value="BAA98842.1"/>
    <property type="molecule type" value="Genomic_DNA"/>
</dbReference>
<dbReference type="EMBL" id="AE009440">
    <property type="protein sequence ID" value="AAP98590.1"/>
    <property type="molecule type" value="Genomic_DNA"/>
</dbReference>
<dbReference type="PIR" id="E72054">
    <property type="entry name" value="E72054"/>
</dbReference>
<dbReference type="PIR" id="H86569">
    <property type="entry name" value="H86569"/>
</dbReference>
<dbReference type="RefSeq" id="NP_224831.1">
    <property type="nucleotide sequence ID" value="NC_000922.1"/>
</dbReference>
<dbReference type="RefSeq" id="WP_010883273.1">
    <property type="nucleotide sequence ID" value="NZ_LN847257.1"/>
</dbReference>
<dbReference type="SMR" id="Q9Z7R9"/>
<dbReference type="STRING" id="406984.CPK_ORF00035"/>
<dbReference type="GeneID" id="45050685"/>
<dbReference type="KEGG" id="cpa:CP_0112"/>
<dbReference type="KEGG" id="cpj:rl5"/>
<dbReference type="KEGG" id="cpn:CPn_0635"/>
<dbReference type="KEGG" id="cpt:CpB0661"/>
<dbReference type="PATRIC" id="fig|115713.3.peg.705"/>
<dbReference type="eggNOG" id="COG0094">
    <property type="taxonomic scope" value="Bacteria"/>
</dbReference>
<dbReference type="HOGENOM" id="CLU_061015_2_1_0"/>
<dbReference type="OMA" id="PIGCAVT"/>
<dbReference type="OrthoDB" id="9806626at2"/>
<dbReference type="Proteomes" id="UP000000583">
    <property type="component" value="Chromosome"/>
</dbReference>
<dbReference type="Proteomes" id="UP000000801">
    <property type="component" value="Chromosome"/>
</dbReference>
<dbReference type="GO" id="GO:1990904">
    <property type="term" value="C:ribonucleoprotein complex"/>
    <property type="evidence" value="ECO:0007669"/>
    <property type="project" value="UniProtKB-KW"/>
</dbReference>
<dbReference type="GO" id="GO:0005840">
    <property type="term" value="C:ribosome"/>
    <property type="evidence" value="ECO:0007669"/>
    <property type="project" value="UniProtKB-KW"/>
</dbReference>
<dbReference type="GO" id="GO:0019843">
    <property type="term" value="F:rRNA binding"/>
    <property type="evidence" value="ECO:0007669"/>
    <property type="project" value="UniProtKB-UniRule"/>
</dbReference>
<dbReference type="GO" id="GO:0003735">
    <property type="term" value="F:structural constituent of ribosome"/>
    <property type="evidence" value="ECO:0007669"/>
    <property type="project" value="InterPro"/>
</dbReference>
<dbReference type="GO" id="GO:0000049">
    <property type="term" value="F:tRNA binding"/>
    <property type="evidence" value="ECO:0007669"/>
    <property type="project" value="UniProtKB-UniRule"/>
</dbReference>
<dbReference type="GO" id="GO:0006412">
    <property type="term" value="P:translation"/>
    <property type="evidence" value="ECO:0007669"/>
    <property type="project" value="UniProtKB-UniRule"/>
</dbReference>
<dbReference type="FunFam" id="3.30.1440.10:FF:000001">
    <property type="entry name" value="50S ribosomal protein L5"/>
    <property type="match status" value="1"/>
</dbReference>
<dbReference type="Gene3D" id="3.30.1440.10">
    <property type="match status" value="1"/>
</dbReference>
<dbReference type="HAMAP" id="MF_01333_B">
    <property type="entry name" value="Ribosomal_uL5_B"/>
    <property type="match status" value="1"/>
</dbReference>
<dbReference type="InterPro" id="IPR002132">
    <property type="entry name" value="Ribosomal_uL5"/>
</dbReference>
<dbReference type="InterPro" id="IPR020930">
    <property type="entry name" value="Ribosomal_uL5_bac-type"/>
</dbReference>
<dbReference type="InterPro" id="IPR031309">
    <property type="entry name" value="Ribosomal_uL5_C"/>
</dbReference>
<dbReference type="InterPro" id="IPR020929">
    <property type="entry name" value="Ribosomal_uL5_CS"/>
</dbReference>
<dbReference type="InterPro" id="IPR022803">
    <property type="entry name" value="Ribosomal_uL5_dom_sf"/>
</dbReference>
<dbReference type="InterPro" id="IPR031310">
    <property type="entry name" value="Ribosomal_uL5_N"/>
</dbReference>
<dbReference type="NCBIfam" id="NF000585">
    <property type="entry name" value="PRK00010.1"/>
    <property type="match status" value="1"/>
</dbReference>
<dbReference type="PANTHER" id="PTHR11994">
    <property type="entry name" value="60S RIBOSOMAL PROTEIN L11-RELATED"/>
    <property type="match status" value="1"/>
</dbReference>
<dbReference type="Pfam" id="PF00281">
    <property type="entry name" value="Ribosomal_L5"/>
    <property type="match status" value="1"/>
</dbReference>
<dbReference type="Pfam" id="PF00673">
    <property type="entry name" value="Ribosomal_L5_C"/>
    <property type="match status" value="1"/>
</dbReference>
<dbReference type="PIRSF" id="PIRSF002161">
    <property type="entry name" value="Ribosomal_L5"/>
    <property type="match status" value="1"/>
</dbReference>
<dbReference type="SUPFAM" id="SSF55282">
    <property type="entry name" value="RL5-like"/>
    <property type="match status" value="1"/>
</dbReference>
<dbReference type="PROSITE" id="PS00358">
    <property type="entry name" value="RIBOSOMAL_L5"/>
    <property type="match status" value="1"/>
</dbReference>
<gene>
    <name evidence="1" type="primary">rplE</name>
    <name type="synonym">rl5</name>
    <name type="ordered locus">CPn_0635</name>
    <name type="ordered locus">CP_0112</name>
    <name type="ordered locus">CpB0661</name>
</gene>
<sequence>MSRLKKFYTEEIRKSLFEKFGYANKMQIPVLKKIVLSMGLAEAAKDKNLFQAHLEELTMISGQKPLVTKARNSIAGFKLREGQGIGAKVTLRGIRMYDFMDRFCNIVSPRIRDFRGFSNKGDGRGCYSVGLDDQQIFPEINLDRVKRTQGLNITWVTTAQTDDECTTLLELMGLRFKKAQ</sequence>